<accession>Q8ZLF4</accession>
<organism>
    <name type="scientific">Salmonella typhimurium (strain LT2 / SGSC1412 / ATCC 700720)</name>
    <dbReference type="NCBI Taxonomy" id="99287"/>
    <lineage>
        <taxon>Bacteria</taxon>
        <taxon>Pseudomonadati</taxon>
        <taxon>Pseudomonadota</taxon>
        <taxon>Gammaproteobacteria</taxon>
        <taxon>Enterobacterales</taxon>
        <taxon>Enterobacteriaceae</taxon>
        <taxon>Salmonella</taxon>
    </lineage>
</organism>
<keyword id="KW-0067">ATP-binding</keyword>
<keyword id="KW-0997">Cell inner membrane</keyword>
<keyword id="KW-1003">Cell membrane</keyword>
<keyword id="KW-0472">Membrane</keyword>
<keyword id="KW-0547">Nucleotide-binding</keyword>
<keyword id="KW-1185">Reference proteome</keyword>
<keyword id="KW-0762">Sugar transport</keyword>
<keyword id="KW-1278">Translocase</keyword>
<keyword id="KW-0813">Transport</keyword>
<feature type="chain" id="PRO_0000289781" description="sn-glycerol-3-phosphate import ATP-binding protein UgpC">
    <location>
        <begin position="1"/>
        <end position="356"/>
    </location>
</feature>
<feature type="domain" description="ABC transporter" evidence="1">
    <location>
        <begin position="4"/>
        <end position="235"/>
    </location>
</feature>
<feature type="binding site" evidence="1">
    <location>
        <begin position="37"/>
        <end position="44"/>
    </location>
    <ligand>
        <name>ATP</name>
        <dbReference type="ChEBI" id="CHEBI:30616"/>
    </ligand>
</feature>
<proteinExistence type="evidence at protein level"/>
<dbReference type="EC" id="7.6.2.10" evidence="1"/>
<dbReference type="EMBL" id="AE006468">
    <property type="protein sequence ID" value="AAL22414.1"/>
    <property type="molecule type" value="Genomic_DNA"/>
</dbReference>
<dbReference type="RefSeq" id="NP_462455.1">
    <property type="nucleotide sequence ID" value="NC_003197.2"/>
</dbReference>
<dbReference type="RefSeq" id="WP_000907838.1">
    <property type="nucleotide sequence ID" value="NC_003197.2"/>
</dbReference>
<dbReference type="SMR" id="Q8ZLF4"/>
<dbReference type="STRING" id="99287.STM3554"/>
<dbReference type="PaxDb" id="99287-STM3554"/>
<dbReference type="GeneID" id="1255077"/>
<dbReference type="KEGG" id="stm:STM3554"/>
<dbReference type="PATRIC" id="fig|99287.12.peg.3757"/>
<dbReference type="HOGENOM" id="CLU_000604_1_1_6"/>
<dbReference type="OMA" id="DSPRNMY"/>
<dbReference type="PhylomeDB" id="Q8ZLF4"/>
<dbReference type="BioCyc" id="SENT99287:STM3554-MONOMER"/>
<dbReference type="Proteomes" id="UP000001014">
    <property type="component" value="Chromosome"/>
</dbReference>
<dbReference type="GO" id="GO:0055052">
    <property type="term" value="C:ATP-binding cassette (ABC) transporter complex, substrate-binding subunit-containing"/>
    <property type="evidence" value="ECO:0000318"/>
    <property type="project" value="GO_Central"/>
</dbReference>
<dbReference type="GO" id="GO:0015430">
    <property type="term" value="F:ABC-type glycerol-3-phosphate transporter activity"/>
    <property type="evidence" value="ECO:0007669"/>
    <property type="project" value="UniProtKB-EC"/>
</dbReference>
<dbReference type="GO" id="GO:0005524">
    <property type="term" value="F:ATP binding"/>
    <property type="evidence" value="ECO:0007669"/>
    <property type="project" value="UniProtKB-KW"/>
</dbReference>
<dbReference type="GO" id="GO:0016887">
    <property type="term" value="F:ATP hydrolysis activity"/>
    <property type="evidence" value="ECO:0007669"/>
    <property type="project" value="InterPro"/>
</dbReference>
<dbReference type="GO" id="GO:0008643">
    <property type="term" value="P:carbohydrate transport"/>
    <property type="evidence" value="ECO:0007669"/>
    <property type="project" value="InterPro"/>
</dbReference>
<dbReference type="GO" id="GO:0015794">
    <property type="term" value="P:glycerol-3-phosphate transmembrane transport"/>
    <property type="evidence" value="ECO:0000318"/>
    <property type="project" value="GO_Central"/>
</dbReference>
<dbReference type="GO" id="GO:0001407">
    <property type="term" value="P:glycerophosphodiester transmembrane transport"/>
    <property type="evidence" value="ECO:0000318"/>
    <property type="project" value="GO_Central"/>
</dbReference>
<dbReference type="CDD" id="cd03301">
    <property type="entry name" value="ABC_MalK_N"/>
    <property type="match status" value="1"/>
</dbReference>
<dbReference type="FunFam" id="3.40.50.300:FF:000042">
    <property type="entry name" value="Maltose/maltodextrin ABC transporter, ATP-binding protein"/>
    <property type="match status" value="1"/>
</dbReference>
<dbReference type="FunFam" id="2.40.50.100:FF:000032">
    <property type="entry name" value="sn-glycerol-3-phosphate import ATP-binding protein UgpC"/>
    <property type="match status" value="1"/>
</dbReference>
<dbReference type="FunFam" id="2.40.50.140:FF:000142">
    <property type="entry name" value="sn-glycerol-3-phosphate import ATP-binding protein UgpC"/>
    <property type="match status" value="1"/>
</dbReference>
<dbReference type="Gene3D" id="2.40.50.100">
    <property type="match status" value="1"/>
</dbReference>
<dbReference type="Gene3D" id="2.40.50.140">
    <property type="entry name" value="Nucleic acid-binding proteins"/>
    <property type="match status" value="1"/>
</dbReference>
<dbReference type="Gene3D" id="3.40.50.300">
    <property type="entry name" value="P-loop containing nucleotide triphosphate hydrolases"/>
    <property type="match status" value="1"/>
</dbReference>
<dbReference type="InterPro" id="IPR003593">
    <property type="entry name" value="AAA+_ATPase"/>
</dbReference>
<dbReference type="InterPro" id="IPR003439">
    <property type="entry name" value="ABC_transporter-like_ATP-bd"/>
</dbReference>
<dbReference type="InterPro" id="IPR017871">
    <property type="entry name" value="ABC_transporter-like_CS"/>
</dbReference>
<dbReference type="InterPro" id="IPR015855">
    <property type="entry name" value="ABC_transpr_MalK-like"/>
</dbReference>
<dbReference type="InterPro" id="IPR047641">
    <property type="entry name" value="ABC_transpr_MalK/UgpC-like"/>
</dbReference>
<dbReference type="InterPro" id="IPR008995">
    <property type="entry name" value="Mo/tungstate-bd_C_term_dom"/>
</dbReference>
<dbReference type="InterPro" id="IPR012340">
    <property type="entry name" value="NA-bd_OB-fold"/>
</dbReference>
<dbReference type="InterPro" id="IPR040582">
    <property type="entry name" value="OB_MalK-like"/>
</dbReference>
<dbReference type="InterPro" id="IPR027417">
    <property type="entry name" value="P-loop_NTPase"/>
</dbReference>
<dbReference type="NCBIfam" id="NF008653">
    <property type="entry name" value="PRK11650.1"/>
    <property type="match status" value="1"/>
</dbReference>
<dbReference type="PANTHER" id="PTHR43875">
    <property type="entry name" value="MALTODEXTRIN IMPORT ATP-BINDING PROTEIN MSMX"/>
    <property type="match status" value="1"/>
</dbReference>
<dbReference type="PANTHER" id="PTHR43875:SF12">
    <property type="entry name" value="SN-GLYCEROL-3-PHOSPHATE IMPORT ATP-BINDING PROTEIN UGPC"/>
    <property type="match status" value="1"/>
</dbReference>
<dbReference type="Pfam" id="PF00005">
    <property type="entry name" value="ABC_tran"/>
    <property type="match status" value="1"/>
</dbReference>
<dbReference type="Pfam" id="PF17912">
    <property type="entry name" value="OB_MalK"/>
    <property type="match status" value="1"/>
</dbReference>
<dbReference type="SMART" id="SM00382">
    <property type="entry name" value="AAA"/>
    <property type="match status" value="1"/>
</dbReference>
<dbReference type="SUPFAM" id="SSF50331">
    <property type="entry name" value="MOP-like"/>
    <property type="match status" value="1"/>
</dbReference>
<dbReference type="SUPFAM" id="SSF52540">
    <property type="entry name" value="P-loop containing nucleoside triphosphate hydrolases"/>
    <property type="match status" value="1"/>
</dbReference>
<dbReference type="PROSITE" id="PS00211">
    <property type="entry name" value="ABC_TRANSPORTER_1"/>
    <property type="match status" value="1"/>
</dbReference>
<dbReference type="PROSITE" id="PS50893">
    <property type="entry name" value="ABC_TRANSPORTER_2"/>
    <property type="match status" value="1"/>
</dbReference>
<dbReference type="PROSITE" id="PS51315">
    <property type="entry name" value="UGPC"/>
    <property type="match status" value="1"/>
</dbReference>
<gene>
    <name evidence="1" type="primary">ugpC</name>
    <name type="ordered locus">STM3554</name>
</gene>
<protein>
    <recommendedName>
        <fullName evidence="1">sn-glycerol-3-phosphate import ATP-binding protein UgpC</fullName>
        <ecNumber evidence="1">7.6.2.10</ecNumber>
    </recommendedName>
</protein>
<name>UGPC_SALTY</name>
<evidence type="ECO:0000255" key="1">
    <source>
        <dbReference type="HAMAP-Rule" id="MF_01727"/>
    </source>
</evidence>
<evidence type="ECO:0000305" key="2"/>
<reference key="1">
    <citation type="journal article" date="2001" name="Nature">
        <title>Complete genome sequence of Salmonella enterica serovar Typhimurium LT2.</title>
        <authorList>
            <person name="McClelland M."/>
            <person name="Sanderson K.E."/>
            <person name="Spieth J."/>
            <person name="Clifton S.W."/>
            <person name="Latreille P."/>
            <person name="Courtney L."/>
            <person name="Porwollik S."/>
            <person name="Ali J."/>
            <person name="Dante M."/>
            <person name="Du F."/>
            <person name="Hou S."/>
            <person name="Layman D."/>
            <person name="Leonard S."/>
            <person name="Nguyen C."/>
            <person name="Scott K."/>
            <person name="Holmes A."/>
            <person name="Grewal N."/>
            <person name="Mulvaney E."/>
            <person name="Ryan E."/>
            <person name="Sun H."/>
            <person name="Florea L."/>
            <person name="Miller W."/>
            <person name="Stoneking T."/>
            <person name="Nhan M."/>
            <person name="Waterston R."/>
            <person name="Wilson R.K."/>
        </authorList>
    </citation>
    <scope>NUCLEOTIDE SEQUENCE [LARGE SCALE GENOMIC DNA]</scope>
    <source>
        <strain>LT2 / SGSC1412 / ATCC 700720</strain>
    </source>
</reference>
<reference key="2">
    <citation type="journal article" date="1983" name="J. Bacteriol.">
        <title>sn-glycerol-3-phosphate transport in Salmonella typhimurium.</title>
        <authorList>
            <person name="Hengge R."/>
            <person name="Larson T.J."/>
            <person name="Boos W."/>
        </authorList>
    </citation>
    <scope>POSSIBLE FUNCTION IN SN-GLYCEROL-3-PHOSPHATE TRANSPORT</scope>
    <source>
        <strain>LT2</strain>
    </source>
</reference>
<sequence>MAGLKLQAVTKSWDGKTQVIQPLTLDVADGEFIVMVGPSGCGKSTLLRMVAGLERVTSGDIWIDRKRVTEMEPKDRGIAMVFQNYALYPHMSVEENMAWGLKIRGMSKAHIEERVREAARILELDGLLKRRPRELSGGQRQRVAMGRAIVREPAVFLFDEPLSNLDAKLRVQMRLELQHLHRRLRTTSLYVTHDQVEAMTLAQRVMVMNKGVAEQIGTPVEVYEKPASRFVASFIGSPAMNLLDGVISASGDRFELPGGLALPIGADYRGHAGRNMTLGIRPEHIALSSQAEGGVPLTVDTLEILGADNLAHGRWGDQKLVVRLAHQQRPAAGSTLWLHLPEHQRHLFDGETGQRV</sequence>
<comment type="function">
    <text evidence="1 2">Part of the ABC transporter complex UgpBAEC involved in sn-glycerol-3-phosphate (G3P) import. Responsible for energy coupling to the transport system.</text>
</comment>
<comment type="catalytic activity">
    <reaction evidence="1">
        <text>sn-glycerol 3-phosphate(out) + ATP + H2O = sn-glycerol 3-phosphate(in) + ADP + phosphate + H(+)</text>
        <dbReference type="Rhea" id="RHEA:21668"/>
        <dbReference type="ChEBI" id="CHEBI:15377"/>
        <dbReference type="ChEBI" id="CHEBI:15378"/>
        <dbReference type="ChEBI" id="CHEBI:30616"/>
        <dbReference type="ChEBI" id="CHEBI:43474"/>
        <dbReference type="ChEBI" id="CHEBI:57597"/>
        <dbReference type="ChEBI" id="CHEBI:456216"/>
        <dbReference type="EC" id="7.6.2.10"/>
    </reaction>
</comment>
<comment type="subunit">
    <text evidence="1">The complex is composed of two ATP-binding proteins (UgpC), two transmembrane proteins (UgpA and UgpE) and a solute-binding protein (UgpB).</text>
</comment>
<comment type="subcellular location">
    <subcellularLocation>
        <location evidence="1">Cell inner membrane</location>
        <topology evidence="1">Peripheral membrane protein</topology>
    </subcellularLocation>
</comment>
<comment type="similarity">
    <text evidence="1">Belongs to the ABC transporter superfamily. sn-glycerol-3-phosphate importer (TC 3.A.1.1.3) family.</text>
</comment>